<organism>
    <name type="scientific">Staphylococcus aureus (strain Mu3 / ATCC 700698)</name>
    <dbReference type="NCBI Taxonomy" id="418127"/>
    <lineage>
        <taxon>Bacteria</taxon>
        <taxon>Bacillati</taxon>
        <taxon>Bacillota</taxon>
        <taxon>Bacilli</taxon>
        <taxon>Bacillales</taxon>
        <taxon>Staphylococcaceae</taxon>
        <taxon>Staphylococcus</taxon>
    </lineage>
</organism>
<comment type="function">
    <text evidence="1">Isomerase that catalyzes the conversion of deoxy-ribose 1-phosphate (dRib-1-P) and ribose 1-phosphate (Rib-1-P) to deoxy-ribose 5-phosphate (dRib-5-P) and ribose 5-phosphate (Rib-5-P), respectively.</text>
</comment>
<comment type="catalytic activity">
    <reaction evidence="1">
        <text>2-deoxy-alpha-D-ribose 1-phosphate = 2-deoxy-D-ribose 5-phosphate</text>
        <dbReference type="Rhea" id="RHEA:27658"/>
        <dbReference type="ChEBI" id="CHEBI:57259"/>
        <dbReference type="ChEBI" id="CHEBI:62877"/>
        <dbReference type="EC" id="5.4.2.7"/>
    </reaction>
</comment>
<comment type="catalytic activity">
    <reaction evidence="1">
        <text>alpha-D-ribose 1-phosphate = D-ribose 5-phosphate</text>
        <dbReference type="Rhea" id="RHEA:18793"/>
        <dbReference type="ChEBI" id="CHEBI:57720"/>
        <dbReference type="ChEBI" id="CHEBI:78346"/>
        <dbReference type="EC" id="5.4.2.7"/>
    </reaction>
</comment>
<comment type="cofactor">
    <cofactor evidence="1">
        <name>Mn(2+)</name>
        <dbReference type="ChEBI" id="CHEBI:29035"/>
    </cofactor>
    <text evidence="1">Binds 2 manganese ions.</text>
</comment>
<comment type="pathway">
    <text evidence="1">Carbohydrate degradation; 2-deoxy-D-ribose 1-phosphate degradation; D-glyceraldehyde 3-phosphate and acetaldehyde from 2-deoxy-alpha-D-ribose 1-phosphate: step 1/2.</text>
</comment>
<comment type="subcellular location">
    <subcellularLocation>
        <location evidence="1">Cytoplasm</location>
    </subcellularLocation>
</comment>
<comment type="similarity">
    <text evidence="1">Belongs to the phosphopentomutase family.</text>
</comment>
<dbReference type="EC" id="5.4.2.7" evidence="1"/>
<dbReference type="EMBL" id="AP009324">
    <property type="protein sequence ID" value="BAF77021.1"/>
    <property type="molecule type" value="Genomic_DNA"/>
</dbReference>
<dbReference type="RefSeq" id="WP_000197806.1">
    <property type="nucleotide sequence ID" value="NZ_CTYB01000009.1"/>
</dbReference>
<dbReference type="SMR" id="A7WXA5"/>
<dbReference type="KEGG" id="saw:SAHV_0138"/>
<dbReference type="HOGENOM" id="CLU_053861_0_0_9"/>
<dbReference type="UniPathway" id="UPA00002">
    <property type="reaction ID" value="UER00467"/>
</dbReference>
<dbReference type="GO" id="GO:0005829">
    <property type="term" value="C:cytosol"/>
    <property type="evidence" value="ECO:0007669"/>
    <property type="project" value="TreeGrafter"/>
</dbReference>
<dbReference type="GO" id="GO:0000287">
    <property type="term" value="F:magnesium ion binding"/>
    <property type="evidence" value="ECO:0007669"/>
    <property type="project" value="InterPro"/>
</dbReference>
<dbReference type="GO" id="GO:0030145">
    <property type="term" value="F:manganese ion binding"/>
    <property type="evidence" value="ECO:0007669"/>
    <property type="project" value="UniProtKB-UniRule"/>
</dbReference>
<dbReference type="GO" id="GO:0008973">
    <property type="term" value="F:phosphopentomutase activity"/>
    <property type="evidence" value="ECO:0007669"/>
    <property type="project" value="UniProtKB-UniRule"/>
</dbReference>
<dbReference type="GO" id="GO:0006018">
    <property type="term" value="P:2-deoxyribose 1-phosphate catabolic process"/>
    <property type="evidence" value="ECO:0007669"/>
    <property type="project" value="UniProtKB-UniRule"/>
</dbReference>
<dbReference type="GO" id="GO:0006015">
    <property type="term" value="P:5-phosphoribose 1-diphosphate biosynthetic process"/>
    <property type="evidence" value="ECO:0007669"/>
    <property type="project" value="UniProtKB-UniPathway"/>
</dbReference>
<dbReference type="GO" id="GO:0043094">
    <property type="term" value="P:metabolic compound salvage"/>
    <property type="evidence" value="ECO:0007669"/>
    <property type="project" value="InterPro"/>
</dbReference>
<dbReference type="GO" id="GO:0009117">
    <property type="term" value="P:nucleotide metabolic process"/>
    <property type="evidence" value="ECO:0007669"/>
    <property type="project" value="InterPro"/>
</dbReference>
<dbReference type="CDD" id="cd16009">
    <property type="entry name" value="PPM"/>
    <property type="match status" value="1"/>
</dbReference>
<dbReference type="FunFam" id="3.30.70.1250:FF:000001">
    <property type="entry name" value="Phosphopentomutase"/>
    <property type="match status" value="1"/>
</dbReference>
<dbReference type="Gene3D" id="3.40.720.10">
    <property type="entry name" value="Alkaline Phosphatase, subunit A"/>
    <property type="match status" value="1"/>
</dbReference>
<dbReference type="Gene3D" id="3.30.70.1250">
    <property type="entry name" value="Phosphopentomutase"/>
    <property type="match status" value="1"/>
</dbReference>
<dbReference type="HAMAP" id="MF_00740">
    <property type="entry name" value="Phosphopentomut"/>
    <property type="match status" value="1"/>
</dbReference>
<dbReference type="InterPro" id="IPR017850">
    <property type="entry name" value="Alkaline_phosphatase_core_sf"/>
</dbReference>
<dbReference type="InterPro" id="IPR010045">
    <property type="entry name" value="DeoB"/>
</dbReference>
<dbReference type="InterPro" id="IPR006124">
    <property type="entry name" value="Metalloenzyme"/>
</dbReference>
<dbReference type="InterPro" id="IPR024052">
    <property type="entry name" value="Phosphopentomutase_DeoB_cap_sf"/>
</dbReference>
<dbReference type="NCBIfam" id="TIGR01696">
    <property type="entry name" value="deoB"/>
    <property type="match status" value="1"/>
</dbReference>
<dbReference type="NCBIfam" id="NF003766">
    <property type="entry name" value="PRK05362.1"/>
    <property type="match status" value="1"/>
</dbReference>
<dbReference type="PANTHER" id="PTHR21110">
    <property type="entry name" value="PHOSPHOPENTOMUTASE"/>
    <property type="match status" value="1"/>
</dbReference>
<dbReference type="PANTHER" id="PTHR21110:SF0">
    <property type="entry name" value="PHOSPHOPENTOMUTASE"/>
    <property type="match status" value="1"/>
</dbReference>
<dbReference type="Pfam" id="PF01676">
    <property type="entry name" value="Metalloenzyme"/>
    <property type="match status" value="1"/>
</dbReference>
<dbReference type="PIRSF" id="PIRSF001491">
    <property type="entry name" value="Ppentomutase"/>
    <property type="match status" value="1"/>
</dbReference>
<dbReference type="SUPFAM" id="SSF53649">
    <property type="entry name" value="Alkaline phosphatase-like"/>
    <property type="match status" value="1"/>
</dbReference>
<dbReference type="SUPFAM" id="SSF143856">
    <property type="entry name" value="DeoB insert domain-like"/>
    <property type="match status" value="1"/>
</dbReference>
<name>DEOB_STAA1</name>
<proteinExistence type="inferred from homology"/>
<gene>
    <name evidence="1" type="primary">deoB</name>
    <name type="ordered locus">SAHV_0138</name>
</gene>
<accession>A7WXA5</accession>
<keyword id="KW-0963">Cytoplasm</keyword>
<keyword id="KW-0413">Isomerase</keyword>
<keyword id="KW-0464">Manganese</keyword>
<keyword id="KW-0479">Metal-binding</keyword>
<reference key="1">
    <citation type="journal article" date="2008" name="Antimicrob. Agents Chemother.">
        <title>Mutated response regulator graR is responsible for phenotypic conversion of Staphylococcus aureus from heterogeneous vancomycin-intermediate resistance to vancomycin-intermediate resistance.</title>
        <authorList>
            <person name="Neoh H.-M."/>
            <person name="Cui L."/>
            <person name="Yuzawa H."/>
            <person name="Takeuchi F."/>
            <person name="Matsuo M."/>
            <person name="Hiramatsu K."/>
        </authorList>
    </citation>
    <scope>NUCLEOTIDE SEQUENCE [LARGE SCALE GENOMIC DNA]</scope>
    <source>
        <strain>Mu3 / ATCC 700698</strain>
    </source>
</reference>
<protein>
    <recommendedName>
        <fullName evidence="1">Phosphopentomutase</fullName>
        <ecNumber evidence="1">5.4.2.7</ecNumber>
    </recommendedName>
    <alternativeName>
        <fullName evidence="1">Phosphodeoxyribomutase</fullName>
    </alternativeName>
</protein>
<feature type="chain" id="PRO_1000046406" description="Phosphopentomutase">
    <location>
        <begin position="1"/>
        <end position="392"/>
    </location>
</feature>
<feature type="binding site" evidence="1">
    <location>
        <position position="14"/>
    </location>
    <ligand>
        <name>Mn(2+)</name>
        <dbReference type="ChEBI" id="CHEBI:29035"/>
        <label>1</label>
    </ligand>
</feature>
<feature type="binding site" evidence="1">
    <location>
        <position position="286"/>
    </location>
    <ligand>
        <name>Mn(2+)</name>
        <dbReference type="ChEBI" id="CHEBI:29035"/>
        <label>2</label>
    </ligand>
</feature>
<feature type="binding site" evidence="1">
    <location>
        <position position="291"/>
    </location>
    <ligand>
        <name>Mn(2+)</name>
        <dbReference type="ChEBI" id="CHEBI:29035"/>
        <label>2</label>
    </ligand>
</feature>
<feature type="binding site" evidence="1">
    <location>
        <position position="327"/>
    </location>
    <ligand>
        <name>Mn(2+)</name>
        <dbReference type="ChEBI" id="CHEBI:29035"/>
        <label>1</label>
    </ligand>
</feature>
<feature type="binding site" evidence="1">
    <location>
        <position position="328"/>
    </location>
    <ligand>
        <name>Mn(2+)</name>
        <dbReference type="ChEBI" id="CHEBI:29035"/>
        <label>1</label>
    </ligand>
</feature>
<feature type="binding site" evidence="1">
    <location>
        <position position="339"/>
    </location>
    <ligand>
        <name>Mn(2+)</name>
        <dbReference type="ChEBI" id="CHEBI:29035"/>
        <label>2</label>
    </ligand>
</feature>
<evidence type="ECO:0000255" key="1">
    <source>
        <dbReference type="HAMAP-Rule" id="MF_00740"/>
    </source>
</evidence>
<sequence>MTRPFNRVHLIVMDSVGIGEAPDAADFKDEGSHTLRHTLEGFDQTLPNLEKLGLGNIDKLPVVNAVEQPEAYYTKLSEASVGKDTMTGHWEIMGLNIMQPFKVYPNGFPEELIQQIEEMTGRKVVANKPASGTQIIDEWGEHQMKTGDLIVYTSADPVLQIAAHEDIIPLEELYDICEKVRELTKDPKYLIGRIIARPYVGEPGNFTRTSNRHDYALKPFGKTVLDHLKDGGYDVIAIGKINDIYDGEGVTEAVRTKSNMDGMDQLMKIVKKDFTGISFLNLVDFDALYGHRRDKPGYAQAIKDFDDRLPELFSNLKEDDLVIITADHGNDPTAPGTDHTREYIPVIMYSPKFKGGHALESDTTFSSIGATIADNFNVTLPEFGKSYLKELK</sequence>